<proteinExistence type="inferred from homology"/>
<feature type="chain" id="PRO_0000075178" description="Alanine--tRNA ligase">
    <location>
        <begin position="1"/>
        <end position="874"/>
    </location>
</feature>
<feature type="binding site" evidence="1">
    <location>
        <position position="562"/>
    </location>
    <ligand>
        <name>Zn(2+)</name>
        <dbReference type="ChEBI" id="CHEBI:29105"/>
    </ligand>
</feature>
<feature type="binding site" evidence="1">
    <location>
        <position position="566"/>
    </location>
    <ligand>
        <name>Zn(2+)</name>
        <dbReference type="ChEBI" id="CHEBI:29105"/>
    </ligand>
</feature>
<feature type="binding site" evidence="1">
    <location>
        <position position="665"/>
    </location>
    <ligand>
        <name>Zn(2+)</name>
        <dbReference type="ChEBI" id="CHEBI:29105"/>
    </ligand>
</feature>
<feature type="binding site" evidence="1">
    <location>
        <position position="669"/>
    </location>
    <ligand>
        <name>Zn(2+)</name>
        <dbReference type="ChEBI" id="CHEBI:29105"/>
    </ligand>
</feature>
<keyword id="KW-0030">Aminoacyl-tRNA synthetase</keyword>
<keyword id="KW-0067">ATP-binding</keyword>
<keyword id="KW-0963">Cytoplasm</keyword>
<keyword id="KW-0436">Ligase</keyword>
<keyword id="KW-0479">Metal-binding</keyword>
<keyword id="KW-0547">Nucleotide-binding</keyword>
<keyword id="KW-0648">Protein biosynthesis</keyword>
<keyword id="KW-1185">Reference proteome</keyword>
<keyword id="KW-0694">RNA-binding</keyword>
<keyword id="KW-0820">tRNA-binding</keyword>
<keyword id="KW-0862">Zinc</keyword>
<name>SYA_PSEPK</name>
<reference key="1">
    <citation type="journal article" date="2002" name="Environ. Microbiol.">
        <title>Complete genome sequence and comparative analysis of the metabolically versatile Pseudomonas putida KT2440.</title>
        <authorList>
            <person name="Nelson K.E."/>
            <person name="Weinel C."/>
            <person name="Paulsen I.T."/>
            <person name="Dodson R.J."/>
            <person name="Hilbert H."/>
            <person name="Martins dos Santos V.A.P."/>
            <person name="Fouts D.E."/>
            <person name="Gill S.R."/>
            <person name="Pop M."/>
            <person name="Holmes M."/>
            <person name="Brinkac L.M."/>
            <person name="Beanan M.J."/>
            <person name="DeBoy R.T."/>
            <person name="Daugherty S.C."/>
            <person name="Kolonay J.F."/>
            <person name="Madupu R."/>
            <person name="Nelson W.C."/>
            <person name="White O."/>
            <person name="Peterson J.D."/>
            <person name="Khouri H.M."/>
            <person name="Hance I."/>
            <person name="Chris Lee P."/>
            <person name="Holtzapple E.K."/>
            <person name="Scanlan D."/>
            <person name="Tran K."/>
            <person name="Moazzez A."/>
            <person name="Utterback T.R."/>
            <person name="Rizzo M."/>
            <person name="Lee K."/>
            <person name="Kosack D."/>
            <person name="Moestl D."/>
            <person name="Wedler H."/>
            <person name="Lauber J."/>
            <person name="Stjepandic D."/>
            <person name="Hoheisel J."/>
            <person name="Straetz M."/>
            <person name="Heim S."/>
            <person name="Kiewitz C."/>
            <person name="Eisen J.A."/>
            <person name="Timmis K.N."/>
            <person name="Duesterhoeft A."/>
            <person name="Tuemmler B."/>
            <person name="Fraser C.M."/>
        </authorList>
    </citation>
    <scope>NUCLEOTIDE SEQUENCE [LARGE SCALE GENOMIC DNA]</scope>
    <source>
        <strain>ATCC 47054 / DSM 6125 / CFBP 8728 / NCIMB 11950 / KT2440</strain>
    </source>
</reference>
<gene>
    <name evidence="1" type="primary">alaS</name>
    <name type="ordered locus">PP_4474</name>
</gene>
<accession>Q88EI8</accession>
<protein>
    <recommendedName>
        <fullName evidence="1">Alanine--tRNA ligase</fullName>
        <ecNumber evidence="1">6.1.1.7</ecNumber>
    </recommendedName>
    <alternativeName>
        <fullName evidence="1">Alanyl-tRNA synthetase</fullName>
        <shortName evidence="1">AlaRS</shortName>
    </alternativeName>
</protein>
<sequence length="874" mass="94712">MKSAEIREAFLRFFEEQGHTRVASSSLIPNNDPTLLFTNAGMNQFKDCFLGAEKRAYTRAVSSQKCVRAGGKHNDLENVGYTARHHTFFEMLGNFSFGDYFKRDAITFAWTFLTSEQWLNLPKEKLWVTVYATDDEAYDIWTKEVGVPAERMVRIGDNKGAPYASDNFWTMGDTGPCGPCTEIFYDHGPDIWGGPPGSPEEDGDRYIEIWNNVFMQFNRTADGVLHPLPAPSVDTGMGLERVSAVLQHVHSNYEIDLFQNLLAAAAKAIGCSNDGQASLKVVADHIRSCGFLIADGVLPSNEGRGYVLRRIIRRACRHGNKLGAKGSFFYQIVAALAAEMGEAFPELKSQQAHIERVLKAEEEQFAKTLEQGLRILEQDLAQLKGDVVPGDVVFKLYDTYGFPMDLTADIARERELTIDEAGFEREMDAQRERARSASAFGMDYNSLVKVDSATEFLGYDATEGQGKIIALYKDGQSVDQLGEGEEGVVVLDRTPFYAESGGQVGDTGFLQAGAARFDVRDTTKTGGAFLHHGVVTSGALVIGSPVEAKVDADVQHATSLNHSATHLLHEALRQVLGEHVQQKGSLVDSQRLRFDFSHFEAVKPEQIKQLEDIVNREIRKNTPVETELTDIETAKAKGAMALFGEKYGDTVRVLSMGGDFSVELCGGIHAKRTGDISLFKIISEGGVASGVRRIEAVTGAAALAYLNAAEEQVKEAAQLVKGNRDNLIDKLSAVLERNRQLEKQLEQLQAKAASAAGDDLSNAAVEVKGAKVLAARLDGQDGKALLALVDQLKNKLGHAVILLGSEHEGKVVLVAGVTKDLSSQLKAGDLMKQAAAAVGGKGGGRPDMAQGGGVDVAALDQALALAVPFAEQGL</sequence>
<comment type="function">
    <text evidence="1">Catalyzes the attachment of alanine to tRNA(Ala) in a two-step reaction: alanine is first activated by ATP to form Ala-AMP and then transferred to the acceptor end of tRNA(Ala). Also edits incorrectly charged Ser-tRNA(Ala) and Gly-tRNA(Ala) via its editing domain.</text>
</comment>
<comment type="catalytic activity">
    <reaction evidence="1">
        <text>tRNA(Ala) + L-alanine + ATP = L-alanyl-tRNA(Ala) + AMP + diphosphate</text>
        <dbReference type="Rhea" id="RHEA:12540"/>
        <dbReference type="Rhea" id="RHEA-COMP:9657"/>
        <dbReference type="Rhea" id="RHEA-COMP:9923"/>
        <dbReference type="ChEBI" id="CHEBI:30616"/>
        <dbReference type="ChEBI" id="CHEBI:33019"/>
        <dbReference type="ChEBI" id="CHEBI:57972"/>
        <dbReference type="ChEBI" id="CHEBI:78442"/>
        <dbReference type="ChEBI" id="CHEBI:78497"/>
        <dbReference type="ChEBI" id="CHEBI:456215"/>
        <dbReference type="EC" id="6.1.1.7"/>
    </reaction>
</comment>
<comment type="cofactor">
    <cofactor evidence="1">
        <name>Zn(2+)</name>
        <dbReference type="ChEBI" id="CHEBI:29105"/>
    </cofactor>
    <text evidence="1">Binds 1 zinc ion per subunit.</text>
</comment>
<comment type="subcellular location">
    <subcellularLocation>
        <location evidence="1">Cytoplasm</location>
    </subcellularLocation>
</comment>
<comment type="domain">
    <text evidence="1">Consists of three domains; the N-terminal catalytic domain, the editing domain and the C-terminal C-Ala domain. The editing domain removes incorrectly charged amino acids, while the C-Ala domain, along with tRNA(Ala), serves as a bridge to cooperatively bring together the editing and aminoacylation centers thus stimulating deacylation of misacylated tRNAs.</text>
</comment>
<comment type="similarity">
    <text evidence="1">Belongs to the class-II aminoacyl-tRNA synthetase family.</text>
</comment>
<organism>
    <name type="scientific">Pseudomonas putida (strain ATCC 47054 / DSM 6125 / CFBP 8728 / NCIMB 11950 / KT2440)</name>
    <dbReference type="NCBI Taxonomy" id="160488"/>
    <lineage>
        <taxon>Bacteria</taxon>
        <taxon>Pseudomonadati</taxon>
        <taxon>Pseudomonadota</taxon>
        <taxon>Gammaproteobacteria</taxon>
        <taxon>Pseudomonadales</taxon>
        <taxon>Pseudomonadaceae</taxon>
        <taxon>Pseudomonas</taxon>
    </lineage>
</organism>
<evidence type="ECO:0000255" key="1">
    <source>
        <dbReference type="HAMAP-Rule" id="MF_00036"/>
    </source>
</evidence>
<dbReference type="EC" id="6.1.1.7" evidence="1"/>
<dbReference type="EMBL" id="AE015451">
    <property type="protein sequence ID" value="AAN70049.1"/>
    <property type="molecule type" value="Genomic_DNA"/>
</dbReference>
<dbReference type="RefSeq" id="NP_746585.1">
    <property type="nucleotide sequence ID" value="NC_002947.4"/>
</dbReference>
<dbReference type="RefSeq" id="WP_010955172.1">
    <property type="nucleotide sequence ID" value="NZ_CP169744.1"/>
</dbReference>
<dbReference type="SMR" id="Q88EI8"/>
<dbReference type="STRING" id="160488.PP_4474"/>
<dbReference type="PaxDb" id="160488-PP_4474"/>
<dbReference type="GeneID" id="83678870"/>
<dbReference type="KEGG" id="ppu:PP_4474"/>
<dbReference type="PATRIC" id="fig|160488.4.peg.4760"/>
<dbReference type="eggNOG" id="COG0013">
    <property type="taxonomic scope" value="Bacteria"/>
</dbReference>
<dbReference type="HOGENOM" id="CLU_004485_1_1_6"/>
<dbReference type="OrthoDB" id="9803884at2"/>
<dbReference type="PhylomeDB" id="Q88EI8"/>
<dbReference type="BioCyc" id="PPUT160488:G1G01-4775-MONOMER"/>
<dbReference type="Proteomes" id="UP000000556">
    <property type="component" value="Chromosome"/>
</dbReference>
<dbReference type="GO" id="GO:0005829">
    <property type="term" value="C:cytosol"/>
    <property type="evidence" value="ECO:0007669"/>
    <property type="project" value="TreeGrafter"/>
</dbReference>
<dbReference type="GO" id="GO:0004813">
    <property type="term" value="F:alanine-tRNA ligase activity"/>
    <property type="evidence" value="ECO:0007669"/>
    <property type="project" value="UniProtKB-UniRule"/>
</dbReference>
<dbReference type="GO" id="GO:0002161">
    <property type="term" value="F:aminoacyl-tRNA deacylase activity"/>
    <property type="evidence" value="ECO:0007669"/>
    <property type="project" value="TreeGrafter"/>
</dbReference>
<dbReference type="GO" id="GO:0005524">
    <property type="term" value="F:ATP binding"/>
    <property type="evidence" value="ECO:0007669"/>
    <property type="project" value="UniProtKB-UniRule"/>
</dbReference>
<dbReference type="GO" id="GO:0000049">
    <property type="term" value="F:tRNA binding"/>
    <property type="evidence" value="ECO:0007669"/>
    <property type="project" value="UniProtKB-KW"/>
</dbReference>
<dbReference type="GO" id="GO:0008270">
    <property type="term" value="F:zinc ion binding"/>
    <property type="evidence" value="ECO:0007669"/>
    <property type="project" value="UniProtKB-UniRule"/>
</dbReference>
<dbReference type="GO" id="GO:0006419">
    <property type="term" value="P:alanyl-tRNA aminoacylation"/>
    <property type="evidence" value="ECO:0007669"/>
    <property type="project" value="UniProtKB-UniRule"/>
</dbReference>
<dbReference type="GO" id="GO:0045892">
    <property type="term" value="P:negative regulation of DNA-templated transcription"/>
    <property type="evidence" value="ECO:0007669"/>
    <property type="project" value="TreeGrafter"/>
</dbReference>
<dbReference type="CDD" id="cd00673">
    <property type="entry name" value="AlaRS_core"/>
    <property type="match status" value="1"/>
</dbReference>
<dbReference type="FunFam" id="2.40.30.130:FF:000001">
    <property type="entry name" value="Alanine--tRNA ligase"/>
    <property type="match status" value="1"/>
</dbReference>
<dbReference type="FunFam" id="3.10.310.40:FF:000001">
    <property type="entry name" value="Alanine--tRNA ligase"/>
    <property type="match status" value="1"/>
</dbReference>
<dbReference type="FunFam" id="3.30.54.20:FF:000001">
    <property type="entry name" value="Alanine--tRNA ligase"/>
    <property type="match status" value="1"/>
</dbReference>
<dbReference type="FunFam" id="3.30.930.10:FF:000004">
    <property type="entry name" value="Alanine--tRNA ligase"/>
    <property type="match status" value="1"/>
</dbReference>
<dbReference type="FunFam" id="3.30.980.10:FF:000004">
    <property type="entry name" value="Alanine--tRNA ligase, cytoplasmic"/>
    <property type="match status" value="1"/>
</dbReference>
<dbReference type="Gene3D" id="2.40.30.130">
    <property type="match status" value="1"/>
</dbReference>
<dbReference type="Gene3D" id="3.10.310.40">
    <property type="match status" value="1"/>
</dbReference>
<dbReference type="Gene3D" id="3.30.54.20">
    <property type="match status" value="1"/>
</dbReference>
<dbReference type="Gene3D" id="6.10.250.550">
    <property type="match status" value="1"/>
</dbReference>
<dbReference type="Gene3D" id="3.30.930.10">
    <property type="entry name" value="Bira Bifunctional Protein, Domain 2"/>
    <property type="match status" value="1"/>
</dbReference>
<dbReference type="Gene3D" id="3.30.980.10">
    <property type="entry name" value="Threonyl-trna Synthetase, Chain A, domain 2"/>
    <property type="match status" value="1"/>
</dbReference>
<dbReference type="HAMAP" id="MF_00036_B">
    <property type="entry name" value="Ala_tRNA_synth_B"/>
    <property type="match status" value="1"/>
</dbReference>
<dbReference type="InterPro" id="IPR045864">
    <property type="entry name" value="aa-tRNA-synth_II/BPL/LPL"/>
</dbReference>
<dbReference type="InterPro" id="IPR002318">
    <property type="entry name" value="Ala-tRNA-lgiase_IIc"/>
</dbReference>
<dbReference type="InterPro" id="IPR018162">
    <property type="entry name" value="Ala-tRNA-ligase_IIc_anticod-bd"/>
</dbReference>
<dbReference type="InterPro" id="IPR018165">
    <property type="entry name" value="Ala-tRNA-synth_IIc_core"/>
</dbReference>
<dbReference type="InterPro" id="IPR018164">
    <property type="entry name" value="Ala-tRNA-synth_IIc_N"/>
</dbReference>
<dbReference type="InterPro" id="IPR050058">
    <property type="entry name" value="Ala-tRNA_ligase"/>
</dbReference>
<dbReference type="InterPro" id="IPR023033">
    <property type="entry name" value="Ala_tRNA_ligase_euk/bac"/>
</dbReference>
<dbReference type="InterPro" id="IPR003156">
    <property type="entry name" value="DHHA1_dom"/>
</dbReference>
<dbReference type="InterPro" id="IPR018163">
    <property type="entry name" value="Thr/Ala-tRNA-synth_IIc_edit"/>
</dbReference>
<dbReference type="InterPro" id="IPR009000">
    <property type="entry name" value="Transl_B-barrel_sf"/>
</dbReference>
<dbReference type="InterPro" id="IPR012947">
    <property type="entry name" value="tRNA_SAD"/>
</dbReference>
<dbReference type="NCBIfam" id="TIGR00344">
    <property type="entry name" value="alaS"/>
    <property type="match status" value="1"/>
</dbReference>
<dbReference type="PANTHER" id="PTHR11777:SF9">
    <property type="entry name" value="ALANINE--TRNA LIGASE, CYTOPLASMIC"/>
    <property type="match status" value="1"/>
</dbReference>
<dbReference type="PANTHER" id="PTHR11777">
    <property type="entry name" value="ALANYL-TRNA SYNTHETASE"/>
    <property type="match status" value="1"/>
</dbReference>
<dbReference type="Pfam" id="PF02272">
    <property type="entry name" value="DHHA1"/>
    <property type="match status" value="1"/>
</dbReference>
<dbReference type="Pfam" id="PF01411">
    <property type="entry name" value="tRNA-synt_2c"/>
    <property type="match status" value="1"/>
</dbReference>
<dbReference type="Pfam" id="PF07973">
    <property type="entry name" value="tRNA_SAD"/>
    <property type="match status" value="1"/>
</dbReference>
<dbReference type="PRINTS" id="PR00980">
    <property type="entry name" value="TRNASYNTHALA"/>
</dbReference>
<dbReference type="SMART" id="SM00863">
    <property type="entry name" value="tRNA_SAD"/>
    <property type="match status" value="1"/>
</dbReference>
<dbReference type="SUPFAM" id="SSF55681">
    <property type="entry name" value="Class II aaRS and biotin synthetases"/>
    <property type="match status" value="1"/>
</dbReference>
<dbReference type="SUPFAM" id="SSF101353">
    <property type="entry name" value="Putative anticodon-binding domain of alanyl-tRNA synthetase (AlaRS)"/>
    <property type="match status" value="1"/>
</dbReference>
<dbReference type="SUPFAM" id="SSF55186">
    <property type="entry name" value="ThrRS/AlaRS common domain"/>
    <property type="match status" value="1"/>
</dbReference>
<dbReference type="SUPFAM" id="SSF50447">
    <property type="entry name" value="Translation proteins"/>
    <property type="match status" value="1"/>
</dbReference>
<dbReference type="PROSITE" id="PS50860">
    <property type="entry name" value="AA_TRNA_LIGASE_II_ALA"/>
    <property type="match status" value="1"/>
</dbReference>